<name>ADPRM_XENTR</name>
<proteinExistence type="evidence at transcript level"/>
<dbReference type="EC" id="3.6.1.13"/>
<dbReference type="EC" id="3.6.1.16"/>
<dbReference type="EC" id="3.6.1.53"/>
<dbReference type="EMBL" id="BC080891">
    <property type="protein sequence ID" value="AAH80891.1"/>
    <property type="molecule type" value="mRNA"/>
</dbReference>
<dbReference type="RefSeq" id="NP_001008013.1">
    <property type="nucleotide sequence ID" value="NM_001008012.1"/>
</dbReference>
<dbReference type="RefSeq" id="XP_012827123.1">
    <property type="nucleotide sequence ID" value="XM_012971669.3"/>
</dbReference>
<dbReference type="SMR" id="Q66JJ3"/>
<dbReference type="FunCoup" id="Q66JJ3">
    <property type="interactions" value="1064"/>
</dbReference>
<dbReference type="STRING" id="8364.ENSXETP00000047422"/>
<dbReference type="PaxDb" id="8364-ENSXETP00000024142"/>
<dbReference type="DNASU" id="493375"/>
<dbReference type="GeneID" id="493375"/>
<dbReference type="KEGG" id="xtr:493375"/>
<dbReference type="AGR" id="Xenbase:XB-GENE-5815851"/>
<dbReference type="CTD" id="56985"/>
<dbReference type="Xenbase" id="XB-GENE-5815851">
    <property type="gene designation" value="adprm"/>
</dbReference>
<dbReference type="eggNOG" id="ENOG502QUQW">
    <property type="taxonomic scope" value="Eukaryota"/>
</dbReference>
<dbReference type="HOGENOM" id="CLU_039893_1_0_1"/>
<dbReference type="InParanoid" id="Q66JJ3"/>
<dbReference type="OMA" id="GHNHAGN"/>
<dbReference type="OrthoDB" id="9675250at2759"/>
<dbReference type="PhylomeDB" id="Q66JJ3"/>
<dbReference type="Reactome" id="R-XTR-2393930">
    <property type="pathway name" value="Phosphate bond hydrolysis by NUDT proteins"/>
</dbReference>
<dbReference type="Proteomes" id="UP000008143">
    <property type="component" value="Chromosome 10"/>
</dbReference>
<dbReference type="Bgee" id="ENSXETG00000011037">
    <property type="expression patterns" value="Expressed in skeletal muscle tissue and 12 other cell types or tissues"/>
</dbReference>
<dbReference type="GO" id="GO:0047631">
    <property type="term" value="F:ADP-ribose diphosphatase activity"/>
    <property type="evidence" value="ECO:0007669"/>
    <property type="project" value="UniProtKB-EC"/>
</dbReference>
<dbReference type="GO" id="GO:0047734">
    <property type="term" value="F:CDP-glycerol diphosphatase activity"/>
    <property type="evidence" value="ECO:0007669"/>
    <property type="project" value="UniProtKB-EC"/>
</dbReference>
<dbReference type="GO" id="GO:0046872">
    <property type="term" value="F:metal ion binding"/>
    <property type="evidence" value="ECO:0007669"/>
    <property type="project" value="UniProtKB-KW"/>
</dbReference>
<dbReference type="CDD" id="cd07396">
    <property type="entry name" value="MPP_Nbla03831"/>
    <property type="match status" value="1"/>
</dbReference>
<dbReference type="Gene3D" id="3.60.21.10">
    <property type="match status" value="1"/>
</dbReference>
<dbReference type="InterPro" id="IPR004843">
    <property type="entry name" value="Calcineurin-like_PHP_ApaH"/>
</dbReference>
<dbReference type="InterPro" id="IPR029052">
    <property type="entry name" value="Metallo-depent_PP-like"/>
</dbReference>
<dbReference type="InterPro" id="IPR041869">
    <property type="entry name" value="MPP_ADPRM"/>
</dbReference>
<dbReference type="PANTHER" id="PTHR16509">
    <property type="match status" value="1"/>
</dbReference>
<dbReference type="PANTHER" id="PTHR16509:SF9">
    <property type="entry name" value="MANGANESE-DEPENDENT ADP-RIBOSE_CDP-ALCOHOL DIPHOSPHATASE"/>
    <property type="match status" value="1"/>
</dbReference>
<dbReference type="Pfam" id="PF00149">
    <property type="entry name" value="Metallophos"/>
    <property type="match status" value="1"/>
</dbReference>
<dbReference type="SUPFAM" id="SSF56300">
    <property type="entry name" value="Metallo-dependent phosphatases"/>
    <property type="match status" value="1"/>
</dbReference>
<feature type="chain" id="PRO_0000286572" description="Manganese-dependent ADP-ribose/CDP-alcohol diphosphatase">
    <location>
        <begin position="1"/>
        <end position="342"/>
    </location>
</feature>
<feature type="binding site" evidence="1">
    <location>
        <position position="18"/>
    </location>
    <ligand>
        <name>Zn(2+)</name>
        <dbReference type="ChEBI" id="CHEBI:29105"/>
        <label>1</label>
    </ligand>
</feature>
<feature type="binding site" evidence="1">
    <location>
        <position position="20"/>
    </location>
    <ligand>
        <name>Zn(2+)</name>
        <dbReference type="ChEBI" id="CHEBI:29105"/>
        <label>1</label>
    </ligand>
</feature>
<feature type="binding site" evidence="1">
    <location>
        <position position="67"/>
    </location>
    <ligand>
        <name>Zn(2+)</name>
        <dbReference type="ChEBI" id="CHEBI:29105"/>
        <label>1</label>
    </ligand>
</feature>
<feature type="binding site" evidence="1">
    <location>
        <position position="67"/>
    </location>
    <ligand>
        <name>Zn(2+)</name>
        <dbReference type="ChEBI" id="CHEBI:29105"/>
        <label>2</label>
    </ligand>
</feature>
<feature type="binding site" evidence="1">
    <location>
        <position position="103"/>
    </location>
    <ligand>
        <name>Zn(2+)</name>
        <dbReference type="ChEBI" id="CHEBI:29105"/>
        <label>2</label>
    </ligand>
</feature>
<feature type="binding site" evidence="1">
    <location>
        <position position="239"/>
    </location>
    <ligand>
        <name>Zn(2+)</name>
        <dbReference type="ChEBI" id="CHEBI:29105"/>
        <label>2</label>
    </ligand>
</feature>
<feature type="binding site" evidence="1">
    <location>
        <position position="276"/>
    </location>
    <ligand>
        <name>Zn(2+)</name>
        <dbReference type="ChEBI" id="CHEBI:29105"/>
        <label>2</label>
    </ligand>
</feature>
<feature type="binding site" evidence="1">
    <location>
        <position position="278"/>
    </location>
    <ligand>
        <name>Zn(2+)</name>
        <dbReference type="ChEBI" id="CHEBI:29105"/>
        <label>1</label>
    </ligand>
</feature>
<reference key="1">
    <citation type="submission" date="2004-08" db="EMBL/GenBank/DDBJ databases">
        <authorList>
            <consortium name="NIH - Xenopus Gene Collection (XGC) project"/>
        </authorList>
    </citation>
    <scope>NUCLEOTIDE SEQUENCE [LARGE SCALE MRNA]</scope>
    <source>
        <tissue>Embryo</tissue>
    </source>
</reference>
<keyword id="KW-0378">Hydrolase</keyword>
<keyword id="KW-0479">Metal-binding</keyword>
<keyword id="KW-1185">Reference proteome</keyword>
<keyword id="KW-0862">Zinc</keyword>
<accession>Q66JJ3</accession>
<evidence type="ECO:0000250" key="1"/>
<evidence type="ECO:0000305" key="2"/>
<sequence length="342" mass="39398">MESKRMEEPYFTFGIIADIQYADMDNRFNYLKTSMRYYRNSLTQLKAAVEEWAMESIKPAFILQLGDIIDGINTKDKSSKTALERVLVEMDKLPIQFHHVWGNHEFYNFSREYLNGSKLNSQARGDRIDRGGGTSENGEFNDESFYAYHFSPCPKFRFLLIDGYDLSPIGREKTSPKYDIALNLLKEKNPNEDLNSPTGLEEVQFVLFNGGISPSQLDWMERVLTSSDEKEENVFVVSHLPVHPDAADPMCLVWNYPEVLSVLQSHPCVVGYLAGHNHEGRYCMDPYGIHHLTFSGVIETPPESRAFGTMYVYEDKMVLKGRGLVEDRTLYYRDPKNKAERH</sequence>
<comment type="function">
    <text evidence="1">Hydrolyzes ADP-ribose, IDP-ribose, CDP-glycerol, CDP-choline and CDP-ethanolamine, but not other non-reducing ADP-sugars or CDP-glucose.</text>
</comment>
<comment type="catalytic activity">
    <reaction>
        <text>CDP-choline + H2O = phosphocholine + CMP + 2 H(+)</text>
        <dbReference type="Rhea" id="RHEA:32487"/>
        <dbReference type="ChEBI" id="CHEBI:15377"/>
        <dbReference type="ChEBI" id="CHEBI:15378"/>
        <dbReference type="ChEBI" id="CHEBI:58779"/>
        <dbReference type="ChEBI" id="CHEBI:60377"/>
        <dbReference type="ChEBI" id="CHEBI:295975"/>
        <dbReference type="EC" id="3.6.1.53"/>
    </reaction>
</comment>
<comment type="catalytic activity">
    <reaction>
        <text>ADP-D-ribose + H2O = D-ribose 5-phosphate + AMP + 2 H(+)</text>
        <dbReference type="Rhea" id="RHEA:10412"/>
        <dbReference type="ChEBI" id="CHEBI:15377"/>
        <dbReference type="ChEBI" id="CHEBI:15378"/>
        <dbReference type="ChEBI" id="CHEBI:57967"/>
        <dbReference type="ChEBI" id="CHEBI:78346"/>
        <dbReference type="ChEBI" id="CHEBI:456215"/>
        <dbReference type="EC" id="3.6.1.13"/>
    </reaction>
</comment>
<comment type="catalytic activity">
    <reaction>
        <text>ADP-D-ribose + H2O = D-ribose 5-phosphate + AMP + 2 H(+)</text>
        <dbReference type="Rhea" id="RHEA:10412"/>
        <dbReference type="ChEBI" id="CHEBI:15377"/>
        <dbReference type="ChEBI" id="CHEBI:15378"/>
        <dbReference type="ChEBI" id="CHEBI:57967"/>
        <dbReference type="ChEBI" id="CHEBI:78346"/>
        <dbReference type="ChEBI" id="CHEBI:456215"/>
        <dbReference type="EC" id="3.6.1.53"/>
    </reaction>
</comment>
<comment type="catalytic activity">
    <reaction>
        <text>CDP-glycerol + H2O = sn-glycerol 3-phosphate + CMP + 2 H(+)</text>
        <dbReference type="Rhea" id="RHEA:21692"/>
        <dbReference type="ChEBI" id="CHEBI:15377"/>
        <dbReference type="ChEBI" id="CHEBI:15378"/>
        <dbReference type="ChEBI" id="CHEBI:57597"/>
        <dbReference type="ChEBI" id="CHEBI:58311"/>
        <dbReference type="ChEBI" id="CHEBI:60377"/>
        <dbReference type="EC" id="3.6.1.16"/>
    </reaction>
</comment>
<comment type="cofactor">
    <cofactor evidence="1">
        <name>Mg(2+)</name>
        <dbReference type="ChEBI" id="CHEBI:18420"/>
    </cofactor>
</comment>
<comment type="subunit">
    <text evidence="1">Monomer.</text>
</comment>
<comment type="similarity">
    <text evidence="2">Belongs to the ADPRibase-Mn family.</text>
</comment>
<gene>
    <name type="primary">adprm</name>
</gene>
<organism>
    <name type="scientific">Xenopus tropicalis</name>
    <name type="common">Western clawed frog</name>
    <name type="synonym">Silurana tropicalis</name>
    <dbReference type="NCBI Taxonomy" id="8364"/>
    <lineage>
        <taxon>Eukaryota</taxon>
        <taxon>Metazoa</taxon>
        <taxon>Chordata</taxon>
        <taxon>Craniata</taxon>
        <taxon>Vertebrata</taxon>
        <taxon>Euteleostomi</taxon>
        <taxon>Amphibia</taxon>
        <taxon>Batrachia</taxon>
        <taxon>Anura</taxon>
        <taxon>Pipoidea</taxon>
        <taxon>Pipidae</taxon>
        <taxon>Xenopodinae</taxon>
        <taxon>Xenopus</taxon>
        <taxon>Silurana</taxon>
    </lineage>
</organism>
<protein>
    <recommendedName>
        <fullName>Manganese-dependent ADP-ribose/CDP-alcohol diphosphatase</fullName>
        <ecNumber>3.6.1.13</ecNumber>
        <ecNumber>3.6.1.16</ecNumber>
        <ecNumber>3.6.1.53</ecNumber>
    </recommendedName>
    <alternativeName>
        <fullName>ADPRibase-Mn</fullName>
    </alternativeName>
    <alternativeName>
        <fullName>CDP-choline phosphohydrolase</fullName>
    </alternativeName>
</protein>